<proteinExistence type="inferred from homology"/>
<gene>
    <name evidence="1" type="primary">rpsN</name>
    <name evidence="1" type="synonym">rps14</name>
    <name type="ordered locus">Syncc9605_0571</name>
</gene>
<name>RS14_SYNSC</name>
<keyword id="KW-0687">Ribonucleoprotein</keyword>
<keyword id="KW-0689">Ribosomal protein</keyword>
<keyword id="KW-0694">RNA-binding</keyword>
<keyword id="KW-0699">rRNA-binding</keyword>
<accession>Q3AM37</accession>
<evidence type="ECO:0000255" key="1">
    <source>
        <dbReference type="HAMAP-Rule" id="MF_00537"/>
    </source>
</evidence>
<evidence type="ECO:0000305" key="2"/>
<feature type="chain" id="PRO_1000128619" description="Small ribosomal subunit protein uS14">
    <location>
        <begin position="1"/>
        <end position="100"/>
    </location>
</feature>
<protein>
    <recommendedName>
        <fullName evidence="1">Small ribosomal subunit protein uS14</fullName>
    </recommendedName>
    <alternativeName>
        <fullName evidence="2">30S ribosomal protein S14</fullName>
    </alternativeName>
</protein>
<dbReference type="EMBL" id="CP000110">
    <property type="protein sequence ID" value="ABB34345.1"/>
    <property type="molecule type" value="Genomic_DNA"/>
</dbReference>
<dbReference type="RefSeq" id="WP_011363576.1">
    <property type="nucleotide sequence ID" value="NC_007516.1"/>
</dbReference>
<dbReference type="SMR" id="Q3AM37"/>
<dbReference type="STRING" id="110662.Syncc9605_0571"/>
<dbReference type="KEGG" id="syd:Syncc9605_0571"/>
<dbReference type="eggNOG" id="COG0199">
    <property type="taxonomic scope" value="Bacteria"/>
</dbReference>
<dbReference type="HOGENOM" id="CLU_139869_0_1_3"/>
<dbReference type="OrthoDB" id="9810484at2"/>
<dbReference type="GO" id="GO:0005737">
    <property type="term" value="C:cytoplasm"/>
    <property type="evidence" value="ECO:0007669"/>
    <property type="project" value="UniProtKB-ARBA"/>
</dbReference>
<dbReference type="GO" id="GO:0015935">
    <property type="term" value="C:small ribosomal subunit"/>
    <property type="evidence" value="ECO:0007669"/>
    <property type="project" value="TreeGrafter"/>
</dbReference>
<dbReference type="GO" id="GO:0019843">
    <property type="term" value="F:rRNA binding"/>
    <property type="evidence" value="ECO:0007669"/>
    <property type="project" value="UniProtKB-UniRule"/>
</dbReference>
<dbReference type="GO" id="GO:0003735">
    <property type="term" value="F:structural constituent of ribosome"/>
    <property type="evidence" value="ECO:0007669"/>
    <property type="project" value="InterPro"/>
</dbReference>
<dbReference type="GO" id="GO:0006412">
    <property type="term" value="P:translation"/>
    <property type="evidence" value="ECO:0007669"/>
    <property type="project" value="UniProtKB-UniRule"/>
</dbReference>
<dbReference type="FunFam" id="1.10.287.1480:FF:000001">
    <property type="entry name" value="30S ribosomal protein S14"/>
    <property type="match status" value="1"/>
</dbReference>
<dbReference type="Gene3D" id="1.10.287.1480">
    <property type="match status" value="1"/>
</dbReference>
<dbReference type="HAMAP" id="MF_00537">
    <property type="entry name" value="Ribosomal_uS14_1"/>
    <property type="match status" value="1"/>
</dbReference>
<dbReference type="InterPro" id="IPR001209">
    <property type="entry name" value="Ribosomal_uS14"/>
</dbReference>
<dbReference type="InterPro" id="IPR023036">
    <property type="entry name" value="Ribosomal_uS14_bac/plastid"/>
</dbReference>
<dbReference type="InterPro" id="IPR018271">
    <property type="entry name" value="Ribosomal_uS14_CS"/>
</dbReference>
<dbReference type="NCBIfam" id="NF006477">
    <property type="entry name" value="PRK08881.1"/>
    <property type="match status" value="1"/>
</dbReference>
<dbReference type="PANTHER" id="PTHR19836">
    <property type="entry name" value="30S RIBOSOMAL PROTEIN S14"/>
    <property type="match status" value="1"/>
</dbReference>
<dbReference type="PANTHER" id="PTHR19836:SF19">
    <property type="entry name" value="SMALL RIBOSOMAL SUBUNIT PROTEIN US14M"/>
    <property type="match status" value="1"/>
</dbReference>
<dbReference type="Pfam" id="PF00253">
    <property type="entry name" value="Ribosomal_S14"/>
    <property type="match status" value="1"/>
</dbReference>
<dbReference type="SUPFAM" id="SSF57716">
    <property type="entry name" value="Glucocorticoid receptor-like (DNA-binding domain)"/>
    <property type="match status" value="1"/>
</dbReference>
<dbReference type="PROSITE" id="PS00527">
    <property type="entry name" value="RIBOSOMAL_S14"/>
    <property type="match status" value="1"/>
</dbReference>
<organism>
    <name type="scientific">Synechococcus sp. (strain CC9605)</name>
    <dbReference type="NCBI Taxonomy" id="110662"/>
    <lineage>
        <taxon>Bacteria</taxon>
        <taxon>Bacillati</taxon>
        <taxon>Cyanobacteriota</taxon>
        <taxon>Cyanophyceae</taxon>
        <taxon>Synechococcales</taxon>
        <taxon>Synechococcaceae</taxon>
        <taxon>Synechococcus</taxon>
    </lineage>
</organism>
<comment type="function">
    <text evidence="1">Binds 16S rRNA, required for the assembly of 30S particles and may also be responsible for determining the conformation of the 16S rRNA at the A site.</text>
</comment>
<comment type="subunit">
    <text evidence="1">Part of the 30S ribosomal subunit. Contacts proteins S3 and S10.</text>
</comment>
<comment type="similarity">
    <text evidence="1">Belongs to the universal ribosomal protein uS14 family.</text>
</comment>
<sequence length="100" mass="11562">MAKKSMIARDVKRKKTVERYAAKRAALMAAFNAAEDPMDRLEIHRKIQALPRNSARIRVRNRCWATGKPRGVYRDFGLCRNQLRERAHKGELPGVVKSSW</sequence>
<reference key="1">
    <citation type="submission" date="2005-07" db="EMBL/GenBank/DDBJ databases">
        <title>Complete sequence of Synechococcus sp. CC9605.</title>
        <authorList>
            <consortium name="US DOE Joint Genome Institute"/>
            <person name="Copeland A."/>
            <person name="Lucas S."/>
            <person name="Lapidus A."/>
            <person name="Barry K."/>
            <person name="Detter J.C."/>
            <person name="Glavina T."/>
            <person name="Hammon N."/>
            <person name="Israni S."/>
            <person name="Pitluck S."/>
            <person name="Schmutz J."/>
            <person name="Martinez M."/>
            <person name="Larimer F."/>
            <person name="Land M."/>
            <person name="Kyrpides N."/>
            <person name="Ivanova N."/>
            <person name="Richardson P."/>
        </authorList>
    </citation>
    <scope>NUCLEOTIDE SEQUENCE [LARGE SCALE GENOMIC DNA]</scope>
    <source>
        <strain>CC9605</strain>
    </source>
</reference>